<proteinExistence type="inferred from homology"/>
<feature type="chain" id="PRO_1000077755" description="UvrABC system protein C">
    <location>
        <begin position="1"/>
        <end position="594"/>
    </location>
</feature>
<feature type="domain" description="GIY-YIG" evidence="1">
    <location>
        <begin position="14"/>
        <end position="91"/>
    </location>
</feature>
<feature type="domain" description="UVR" evidence="1">
    <location>
        <begin position="196"/>
        <end position="231"/>
    </location>
</feature>
<comment type="function">
    <text evidence="1">The UvrABC repair system catalyzes the recognition and processing of DNA lesions. UvrC both incises the 5' and 3' sides of the lesion. The N-terminal half is responsible for the 3' incision and the C-terminal half is responsible for the 5' incision.</text>
</comment>
<comment type="subunit">
    <text evidence="1">Interacts with UvrB in an incision complex.</text>
</comment>
<comment type="subcellular location">
    <subcellularLocation>
        <location evidence="1">Cytoplasm</location>
    </subcellularLocation>
</comment>
<comment type="similarity">
    <text evidence="1">Belongs to the UvrC family.</text>
</comment>
<gene>
    <name evidence="1" type="primary">uvrC</name>
    <name type="ordered locus">BALH_4104</name>
</gene>
<protein>
    <recommendedName>
        <fullName evidence="1">UvrABC system protein C</fullName>
        <shortName evidence="1">Protein UvrC</shortName>
    </recommendedName>
    <alternativeName>
        <fullName evidence="1">Excinuclease ABC subunit C</fullName>
    </alternativeName>
</protein>
<name>UVRC_BACAH</name>
<reference key="1">
    <citation type="journal article" date="2007" name="J. Bacteriol.">
        <title>The complete genome sequence of Bacillus thuringiensis Al Hakam.</title>
        <authorList>
            <person name="Challacombe J.F."/>
            <person name="Altherr M.R."/>
            <person name="Xie G."/>
            <person name="Bhotika S.S."/>
            <person name="Brown N."/>
            <person name="Bruce D."/>
            <person name="Campbell C.S."/>
            <person name="Campbell M.L."/>
            <person name="Chen J."/>
            <person name="Chertkov O."/>
            <person name="Cleland C."/>
            <person name="Dimitrijevic M."/>
            <person name="Doggett N.A."/>
            <person name="Fawcett J.J."/>
            <person name="Glavina T."/>
            <person name="Goodwin L.A."/>
            <person name="Green L.D."/>
            <person name="Han C.S."/>
            <person name="Hill K.K."/>
            <person name="Hitchcock P."/>
            <person name="Jackson P.J."/>
            <person name="Keim P."/>
            <person name="Kewalramani A.R."/>
            <person name="Longmire J."/>
            <person name="Lucas S."/>
            <person name="Malfatti S."/>
            <person name="Martinez D."/>
            <person name="McMurry K."/>
            <person name="Meincke L.J."/>
            <person name="Misra M."/>
            <person name="Moseman B.L."/>
            <person name="Mundt M."/>
            <person name="Munk A.C."/>
            <person name="Okinaka R.T."/>
            <person name="Parson-Quintana B."/>
            <person name="Reilly L.P."/>
            <person name="Richardson P."/>
            <person name="Robinson D.L."/>
            <person name="Saunders E."/>
            <person name="Tapia R."/>
            <person name="Tesmer J.G."/>
            <person name="Thayer N."/>
            <person name="Thompson L.S."/>
            <person name="Tice H."/>
            <person name="Ticknor L.O."/>
            <person name="Wills P.L."/>
            <person name="Gilna P."/>
            <person name="Brettin T.S."/>
        </authorList>
    </citation>
    <scope>NUCLEOTIDE SEQUENCE [LARGE SCALE GENOMIC DNA]</scope>
    <source>
        <strain>Al Hakam</strain>
    </source>
</reference>
<sequence>MHEHLKEKLAILPDQPGCYLMKDKQGTVIYVGKAKVLKNRVRSYFTGSHDGKTLRLVGEIVDFEYIVTSSNLEALILELNLIKKHDPKYNIQLKDDKTYPFIKITAEKQPRLLITRNVKKDKGKYFGPYPNAQSAHETKKLLDRMYPLRKCSNMPDKVCLYYHMGQCLAPCVKEVTEEQNKEIVDEIIKFLNGGHKEVRSELETKMYEASEKLEFERAKELRDQIAHIDAIMEKQKMIMSDLVDRDVFGYAVDKGWMCVQVFFVRKGKLIERDVSMFPIYDEPEEGFLTFIGQFYENSSHFKPKEIVVPGSIDSELVERFLEVEATQPKRGKKKDLVELANKNAKIALEEKFYLIERDEERTIKAVENLGKQLGIETPYRIEAFDNSNIQGTNPVSAMIAFIDGKPAKKEYRKYKIKTVQGPDDYESMREVVRRRYTRALKEGLPLPDLIIIDGGKGHLAAASDVLENELGLYIPMAGLVKDDKHKTSHLIIGDPPEPVMLERNSQEFYLLQRVQDEVHRFAITFHRQLHGKSVIQSALDDIPGIGDKRKKVLLKHFGSLKKMKEASIEEFVEAGMPKNVAETIYTYLTDKKTL</sequence>
<evidence type="ECO:0000255" key="1">
    <source>
        <dbReference type="HAMAP-Rule" id="MF_00203"/>
    </source>
</evidence>
<keyword id="KW-0963">Cytoplasm</keyword>
<keyword id="KW-0227">DNA damage</keyword>
<keyword id="KW-0228">DNA excision</keyword>
<keyword id="KW-0234">DNA repair</keyword>
<keyword id="KW-0267">Excision nuclease</keyword>
<keyword id="KW-0742">SOS response</keyword>
<accession>A0RJC3</accession>
<dbReference type="EMBL" id="CP000485">
    <property type="protein sequence ID" value="ABK87316.1"/>
    <property type="molecule type" value="Genomic_DNA"/>
</dbReference>
<dbReference type="RefSeq" id="WP_000544275.1">
    <property type="nucleotide sequence ID" value="NC_008600.1"/>
</dbReference>
<dbReference type="SMR" id="A0RJC3"/>
<dbReference type="KEGG" id="btl:BALH_4104"/>
<dbReference type="HOGENOM" id="CLU_014841_3_2_9"/>
<dbReference type="GO" id="GO:0005737">
    <property type="term" value="C:cytoplasm"/>
    <property type="evidence" value="ECO:0007669"/>
    <property type="project" value="UniProtKB-SubCell"/>
</dbReference>
<dbReference type="GO" id="GO:0009380">
    <property type="term" value="C:excinuclease repair complex"/>
    <property type="evidence" value="ECO:0007669"/>
    <property type="project" value="InterPro"/>
</dbReference>
<dbReference type="GO" id="GO:0003677">
    <property type="term" value="F:DNA binding"/>
    <property type="evidence" value="ECO:0007669"/>
    <property type="project" value="UniProtKB-UniRule"/>
</dbReference>
<dbReference type="GO" id="GO:0009381">
    <property type="term" value="F:excinuclease ABC activity"/>
    <property type="evidence" value="ECO:0007669"/>
    <property type="project" value="UniProtKB-UniRule"/>
</dbReference>
<dbReference type="GO" id="GO:0006289">
    <property type="term" value="P:nucleotide-excision repair"/>
    <property type="evidence" value="ECO:0007669"/>
    <property type="project" value="UniProtKB-UniRule"/>
</dbReference>
<dbReference type="GO" id="GO:0009432">
    <property type="term" value="P:SOS response"/>
    <property type="evidence" value="ECO:0007669"/>
    <property type="project" value="UniProtKB-UniRule"/>
</dbReference>
<dbReference type="CDD" id="cd10434">
    <property type="entry name" value="GIY-YIG_UvrC_Cho"/>
    <property type="match status" value="1"/>
</dbReference>
<dbReference type="FunFam" id="1.10.150.20:FF:000005">
    <property type="entry name" value="UvrABC system protein C"/>
    <property type="match status" value="1"/>
</dbReference>
<dbReference type="FunFam" id="3.30.420.340:FF:000002">
    <property type="entry name" value="UvrABC system protein C"/>
    <property type="match status" value="1"/>
</dbReference>
<dbReference type="FunFam" id="3.40.1440.10:FF:000001">
    <property type="entry name" value="UvrABC system protein C"/>
    <property type="match status" value="1"/>
</dbReference>
<dbReference type="FunFam" id="4.10.860.10:FF:000002">
    <property type="entry name" value="UvrABC system protein C"/>
    <property type="match status" value="1"/>
</dbReference>
<dbReference type="Gene3D" id="1.10.150.20">
    <property type="entry name" value="5' to 3' exonuclease, C-terminal subdomain"/>
    <property type="match status" value="1"/>
</dbReference>
<dbReference type="Gene3D" id="3.40.1440.10">
    <property type="entry name" value="GIY-YIG endonuclease"/>
    <property type="match status" value="1"/>
</dbReference>
<dbReference type="Gene3D" id="4.10.860.10">
    <property type="entry name" value="UVR domain"/>
    <property type="match status" value="1"/>
</dbReference>
<dbReference type="Gene3D" id="3.30.420.340">
    <property type="entry name" value="UvrC, RNAse H endonuclease domain"/>
    <property type="match status" value="1"/>
</dbReference>
<dbReference type="HAMAP" id="MF_00203">
    <property type="entry name" value="UvrC"/>
    <property type="match status" value="1"/>
</dbReference>
<dbReference type="InterPro" id="IPR000305">
    <property type="entry name" value="GIY-YIG_endonuc"/>
</dbReference>
<dbReference type="InterPro" id="IPR035901">
    <property type="entry name" value="GIY-YIG_endonuc_sf"/>
</dbReference>
<dbReference type="InterPro" id="IPR047296">
    <property type="entry name" value="GIY-YIG_UvrC_Cho"/>
</dbReference>
<dbReference type="InterPro" id="IPR010994">
    <property type="entry name" value="RuvA_2-like"/>
</dbReference>
<dbReference type="InterPro" id="IPR001943">
    <property type="entry name" value="UVR_dom"/>
</dbReference>
<dbReference type="InterPro" id="IPR036876">
    <property type="entry name" value="UVR_dom_sf"/>
</dbReference>
<dbReference type="InterPro" id="IPR050066">
    <property type="entry name" value="UvrABC_protein_C"/>
</dbReference>
<dbReference type="InterPro" id="IPR004791">
    <property type="entry name" value="UvrC"/>
</dbReference>
<dbReference type="InterPro" id="IPR001162">
    <property type="entry name" value="UvrC_RNase_H_dom"/>
</dbReference>
<dbReference type="InterPro" id="IPR038476">
    <property type="entry name" value="UvrC_RNase_H_dom_sf"/>
</dbReference>
<dbReference type="NCBIfam" id="NF001824">
    <property type="entry name" value="PRK00558.1-5"/>
    <property type="match status" value="1"/>
</dbReference>
<dbReference type="NCBIfam" id="TIGR00194">
    <property type="entry name" value="uvrC"/>
    <property type="match status" value="1"/>
</dbReference>
<dbReference type="PANTHER" id="PTHR30562:SF1">
    <property type="entry name" value="UVRABC SYSTEM PROTEIN C"/>
    <property type="match status" value="1"/>
</dbReference>
<dbReference type="PANTHER" id="PTHR30562">
    <property type="entry name" value="UVRC/OXIDOREDUCTASE"/>
    <property type="match status" value="1"/>
</dbReference>
<dbReference type="Pfam" id="PF01541">
    <property type="entry name" value="GIY-YIG"/>
    <property type="match status" value="1"/>
</dbReference>
<dbReference type="Pfam" id="PF02151">
    <property type="entry name" value="UVR"/>
    <property type="match status" value="1"/>
</dbReference>
<dbReference type="Pfam" id="PF22920">
    <property type="entry name" value="UvrC_RNaseH"/>
    <property type="match status" value="1"/>
</dbReference>
<dbReference type="Pfam" id="PF08459">
    <property type="entry name" value="UvrC_RNaseH_dom"/>
    <property type="match status" value="1"/>
</dbReference>
<dbReference type="SMART" id="SM00465">
    <property type="entry name" value="GIYc"/>
    <property type="match status" value="1"/>
</dbReference>
<dbReference type="SUPFAM" id="SSF46600">
    <property type="entry name" value="C-terminal UvrC-binding domain of UvrB"/>
    <property type="match status" value="1"/>
</dbReference>
<dbReference type="SUPFAM" id="SSF82771">
    <property type="entry name" value="GIY-YIG endonuclease"/>
    <property type="match status" value="1"/>
</dbReference>
<dbReference type="SUPFAM" id="SSF47781">
    <property type="entry name" value="RuvA domain 2-like"/>
    <property type="match status" value="1"/>
</dbReference>
<dbReference type="PROSITE" id="PS50164">
    <property type="entry name" value="GIY_YIG"/>
    <property type="match status" value="1"/>
</dbReference>
<dbReference type="PROSITE" id="PS50151">
    <property type="entry name" value="UVR"/>
    <property type="match status" value="1"/>
</dbReference>
<dbReference type="PROSITE" id="PS50165">
    <property type="entry name" value="UVRC"/>
    <property type="match status" value="1"/>
</dbReference>
<organism>
    <name type="scientific">Bacillus thuringiensis (strain Al Hakam)</name>
    <dbReference type="NCBI Taxonomy" id="412694"/>
    <lineage>
        <taxon>Bacteria</taxon>
        <taxon>Bacillati</taxon>
        <taxon>Bacillota</taxon>
        <taxon>Bacilli</taxon>
        <taxon>Bacillales</taxon>
        <taxon>Bacillaceae</taxon>
        <taxon>Bacillus</taxon>
        <taxon>Bacillus cereus group</taxon>
    </lineage>
</organism>